<keyword id="KW-0002">3D-structure</keyword>
<keyword id="KW-1185">Reference proteome</keyword>
<keyword id="KW-0687">Ribonucleoprotein</keyword>
<keyword id="KW-0689">Ribosomal protein</keyword>
<keyword id="KW-0694">RNA-binding</keyword>
<keyword id="KW-0699">rRNA-binding</keyword>
<keyword id="KW-0820">tRNA-binding</keyword>
<protein>
    <recommendedName>
        <fullName evidence="1">Large ribosomal subunit protein uL5</fullName>
    </recommendedName>
    <alternativeName>
        <fullName evidence="3">50S ribosomal protein L5</fullName>
    </alternativeName>
</protein>
<evidence type="ECO:0000255" key="1">
    <source>
        <dbReference type="HAMAP-Rule" id="MF_01333"/>
    </source>
</evidence>
<evidence type="ECO:0000269" key="2">
    <source>
    </source>
</evidence>
<evidence type="ECO:0000305" key="3"/>
<evidence type="ECO:0007744" key="4">
    <source>
        <dbReference type="PDB" id="6SKF"/>
    </source>
</evidence>
<evidence type="ECO:0007744" key="5">
    <source>
        <dbReference type="PDB" id="6SKG"/>
    </source>
</evidence>
<evidence type="ECO:0007744" key="6">
    <source>
        <dbReference type="PDB" id="6TH6"/>
    </source>
</evidence>
<proteinExistence type="evidence at protein level"/>
<comment type="function">
    <text evidence="1">This is one of the proteins that bind and probably mediate the attachment of the 5S RNA into the large ribosomal subunit, where it forms part of the central protuberance. In the 70S ribosome it contacts protein S13 of the 30S subunit (bridge B1b), connecting the 2 subunits; this bridge is implicated in subunit movement. May contact the P site tRNA; the 5S rRNA and some of its associated proteins might help stabilize positioning of ribosome-bound tRNAs.</text>
</comment>
<comment type="subunit">
    <text evidence="1 2">Part of the 50S ribosomal subunit; contacts the 5S rRNA and probably tRNA. Forms a bridge to the 30S subunit in the 70S ribosome.</text>
</comment>
<comment type="similarity">
    <text evidence="1">Belongs to the universal ribosomal protein uL5 family.</text>
</comment>
<dbReference type="EMBL" id="AP006878">
    <property type="protein sequence ID" value="BAD85717.1"/>
    <property type="molecule type" value="Genomic_DNA"/>
</dbReference>
<dbReference type="RefSeq" id="WP_011250479.1">
    <property type="nucleotide sequence ID" value="NC_006624.1"/>
</dbReference>
<dbReference type="PDB" id="6SKF">
    <property type="method" value="EM"/>
    <property type="resolution" value="2.95 A"/>
    <property type="chains" value="BF=1-183"/>
</dbReference>
<dbReference type="PDB" id="6SKG">
    <property type="method" value="EM"/>
    <property type="resolution" value="2.65 A"/>
    <property type="chains" value="BF=1-183"/>
</dbReference>
<dbReference type="PDB" id="6TH6">
    <property type="method" value="EM"/>
    <property type="resolution" value="2.55 A"/>
    <property type="chains" value="BF=1-183"/>
</dbReference>
<dbReference type="PDBsum" id="6SKF"/>
<dbReference type="PDBsum" id="6SKG"/>
<dbReference type="PDBsum" id="6TH6"/>
<dbReference type="EMDB" id="EMD-10223"/>
<dbReference type="EMDB" id="EMD-10224"/>
<dbReference type="EMDB" id="EMD-10503"/>
<dbReference type="SMR" id="Q5JJG1"/>
<dbReference type="FunCoup" id="Q5JJG1">
    <property type="interactions" value="143"/>
</dbReference>
<dbReference type="STRING" id="69014.TK1528"/>
<dbReference type="EnsemblBacteria" id="BAD85717">
    <property type="protein sequence ID" value="BAD85717"/>
    <property type="gene ID" value="TK1528"/>
</dbReference>
<dbReference type="GeneID" id="78448056"/>
<dbReference type="KEGG" id="tko:TK1528"/>
<dbReference type="PATRIC" id="fig|69014.16.peg.1488"/>
<dbReference type="eggNOG" id="arCOG04092">
    <property type="taxonomic scope" value="Archaea"/>
</dbReference>
<dbReference type="HOGENOM" id="CLU_061015_3_0_2"/>
<dbReference type="InParanoid" id="Q5JJG1"/>
<dbReference type="OrthoDB" id="372044at2157"/>
<dbReference type="PhylomeDB" id="Q5JJG1"/>
<dbReference type="Proteomes" id="UP000000536">
    <property type="component" value="Chromosome"/>
</dbReference>
<dbReference type="GO" id="GO:0022625">
    <property type="term" value="C:cytosolic large ribosomal subunit"/>
    <property type="evidence" value="ECO:0000318"/>
    <property type="project" value="GO_Central"/>
</dbReference>
<dbReference type="GO" id="GO:0003723">
    <property type="term" value="F:RNA binding"/>
    <property type="evidence" value="ECO:0000318"/>
    <property type="project" value="GO_Central"/>
</dbReference>
<dbReference type="GO" id="GO:0019843">
    <property type="term" value="F:rRNA binding"/>
    <property type="evidence" value="ECO:0007669"/>
    <property type="project" value="UniProtKB-UniRule"/>
</dbReference>
<dbReference type="GO" id="GO:0003735">
    <property type="term" value="F:structural constituent of ribosome"/>
    <property type="evidence" value="ECO:0000318"/>
    <property type="project" value="GO_Central"/>
</dbReference>
<dbReference type="GO" id="GO:0000049">
    <property type="term" value="F:tRNA binding"/>
    <property type="evidence" value="ECO:0007669"/>
    <property type="project" value="UniProtKB-UniRule"/>
</dbReference>
<dbReference type="GO" id="GO:0006412">
    <property type="term" value="P:translation"/>
    <property type="evidence" value="ECO:0000318"/>
    <property type="project" value="GO_Central"/>
</dbReference>
<dbReference type="FunFam" id="3.30.1440.10:FF:000002">
    <property type="entry name" value="60S ribosomal protein L11"/>
    <property type="match status" value="1"/>
</dbReference>
<dbReference type="Gene3D" id="3.30.1440.10">
    <property type="match status" value="1"/>
</dbReference>
<dbReference type="HAMAP" id="MF_01333_A">
    <property type="entry name" value="Ribosomal_uL5_A"/>
    <property type="match status" value="1"/>
</dbReference>
<dbReference type="InterPro" id="IPR002132">
    <property type="entry name" value="Ribosomal_uL5"/>
</dbReference>
<dbReference type="InterPro" id="IPR022804">
    <property type="entry name" value="Ribosomal_uL5_arc"/>
</dbReference>
<dbReference type="InterPro" id="IPR031309">
    <property type="entry name" value="Ribosomal_uL5_C"/>
</dbReference>
<dbReference type="InterPro" id="IPR022803">
    <property type="entry name" value="Ribosomal_uL5_dom_sf"/>
</dbReference>
<dbReference type="InterPro" id="IPR031310">
    <property type="entry name" value="Ribosomal_uL5_N"/>
</dbReference>
<dbReference type="NCBIfam" id="NF003258">
    <property type="entry name" value="PRK04219.1"/>
    <property type="match status" value="1"/>
</dbReference>
<dbReference type="PANTHER" id="PTHR11994">
    <property type="entry name" value="60S RIBOSOMAL PROTEIN L11-RELATED"/>
    <property type="match status" value="1"/>
</dbReference>
<dbReference type="Pfam" id="PF00281">
    <property type="entry name" value="Ribosomal_L5"/>
    <property type="match status" value="1"/>
</dbReference>
<dbReference type="Pfam" id="PF00673">
    <property type="entry name" value="Ribosomal_L5_C"/>
    <property type="match status" value="1"/>
</dbReference>
<dbReference type="PIRSF" id="PIRSF002161">
    <property type="entry name" value="Ribosomal_L5"/>
    <property type="match status" value="1"/>
</dbReference>
<dbReference type="SUPFAM" id="SSF55282">
    <property type="entry name" value="RL5-like"/>
    <property type="match status" value="1"/>
</dbReference>
<gene>
    <name evidence="1" type="primary">rpl5</name>
    <name type="ordered locus">TK1528</name>
</gene>
<organism>
    <name type="scientific">Thermococcus kodakarensis (strain ATCC BAA-918 / JCM 12380 / KOD1)</name>
    <name type="common">Pyrococcus kodakaraensis (strain KOD1)</name>
    <dbReference type="NCBI Taxonomy" id="69014"/>
    <lineage>
        <taxon>Archaea</taxon>
        <taxon>Methanobacteriati</taxon>
        <taxon>Methanobacteriota</taxon>
        <taxon>Thermococci</taxon>
        <taxon>Thermococcales</taxon>
        <taxon>Thermococcaceae</taxon>
        <taxon>Thermococcus</taxon>
    </lineage>
</organism>
<name>RL5_THEKO</name>
<sequence>MQINREAILADWEAHPMRKPRIAKVTINIGVGESGERLTKAETMLEQLVGQKPIRRRAKQTNRDFGIRRGEPIAVKVTLRGEKAYQMLDRLLEAVDRKLKASNFDEHGNFCFGIQEHINIPGVEYDPEIGIFGMDVCVTLERPGFRVAKRKRQRRKIPTKHKLTKEEGIVFAMEELKAKVEGL</sequence>
<accession>Q5JJG1</accession>
<feature type="chain" id="PRO_0000125067" description="Large ribosomal subunit protein uL5">
    <location>
        <begin position="1"/>
        <end position="183"/>
    </location>
</feature>
<reference key="1">
    <citation type="journal article" date="2005" name="Genome Res.">
        <title>Complete genome sequence of the hyperthermophilic archaeon Thermococcus kodakaraensis KOD1 and comparison with Pyrococcus genomes.</title>
        <authorList>
            <person name="Fukui T."/>
            <person name="Atomi H."/>
            <person name="Kanai T."/>
            <person name="Matsumi R."/>
            <person name="Fujiwara S."/>
            <person name="Imanaka T."/>
        </authorList>
    </citation>
    <scope>NUCLEOTIDE SEQUENCE [LARGE SCALE GENOMIC DNA]</scope>
    <source>
        <strain>ATCC BAA-918 / JCM 12380 / KOD1</strain>
    </source>
</reference>
<reference evidence="4 5 6" key="2">
    <citation type="journal article" date="2020" name="Nature">
        <title>Dynamic RNA acetylation revealed by quantitative cross-evolutionary mapping.</title>
        <authorList>
            <person name="Sas-Chen A."/>
            <person name="Thomas J.M."/>
            <person name="Matzov D."/>
            <person name="Taoka M."/>
            <person name="Nance K.D."/>
            <person name="Nir R."/>
            <person name="Bryson K.M."/>
            <person name="Shachar R."/>
            <person name="Liman G.L.S."/>
            <person name="Burkhart B.W."/>
            <person name="Gamage S.T."/>
            <person name="Nobe Y."/>
            <person name="Briney C.A."/>
            <person name="Levy M.J."/>
            <person name="Fuchs R.T."/>
            <person name="Robb G.B."/>
            <person name="Hartmann J."/>
            <person name="Sharma S."/>
            <person name="Lin Q."/>
            <person name="Florens L."/>
            <person name="Washburn M.P."/>
            <person name="Isobe T."/>
            <person name="Santangelo T.J."/>
            <person name="Shalev-Benami M."/>
            <person name="Meier J.L."/>
            <person name="Schwartz S."/>
        </authorList>
    </citation>
    <scope>STRUCTURE BY ELECTRON MICROSCOPY (2.55 ANGSTROMS) IN 70S RIBOSOME</scope>
    <scope>SUBUNIT</scope>
    <source>
        <strain>ATCC BAA-918 / TS559</strain>
    </source>
</reference>